<reference key="1">
    <citation type="journal article" date="2004" name="Nature">
        <title>Genome evolution in yeasts.</title>
        <authorList>
            <person name="Dujon B."/>
            <person name="Sherman D."/>
            <person name="Fischer G."/>
            <person name="Durrens P."/>
            <person name="Casaregola S."/>
            <person name="Lafontaine I."/>
            <person name="de Montigny J."/>
            <person name="Marck C."/>
            <person name="Neuveglise C."/>
            <person name="Talla E."/>
            <person name="Goffard N."/>
            <person name="Frangeul L."/>
            <person name="Aigle M."/>
            <person name="Anthouard V."/>
            <person name="Babour A."/>
            <person name="Barbe V."/>
            <person name="Barnay S."/>
            <person name="Blanchin S."/>
            <person name="Beckerich J.-M."/>
            <person name="Beyne E."/>
            <person name="Bleykasten C."/>
            <person name="Boisrame A."/>
            <person name="Boyer J."/>
            <person name="Cattolico L."/>
            <person name="Confanioleri F."/>
            <person name="de Daruvar A."/>
            <person name="Despons L."/>
            <person name="Fabre E."/>
            <person name="Fairhead C."/>
            <person name="Ferry-Dumazet H."/>
            <person name="Groppi A."/>
            <person name="Hantraye F."/>
            <person name="Hennequin C."/>
            <person name="Jauniaux N."/>
            <person name="Joyet P."/>
            <person name="Kachouri R."/>
            <person name="Kerrest A."/>
            <person name="Koszul R."/>
            <person name="Lemaire M."/>
            <person name="Lesur I."/>
            <person name="Ma L."/>
            <person name="Muller H."/>
            <person name="Nicaud J.-M."/>
            <person name="Nikolski M."/>
            <person name="Oztas S."/>
            <person name="Ozier-Kalogeropoulos O."/>
            <person name="Pellenz S."/>
            <person name="Potier S."/>
            <person name="Richard G.-F."/>
            <person name="Straub M.-L."/>
            <person name="Suleau A."/>
            <person name="Swennen D."/>
            <person name="Tekaia F."/>
            <person name="Wesolowski-Louvel M."/>
            <person name="Westhof E."/>
            <person name="Wirth B."/>
            <person name="Zeniou-Meyer M."/>
            <person name="Zivanovic Y."/>
            <person name="Bolotin-Fukuhara M."/>
            <person name="Thierry A."/>
            <person name="Bouchier C."/>
            <person name="Caudron B."/>
            <person name="Scarpelli C."/>
            <person name="Gaillardin C."/>
            <person name="Weissenbach J."/>
            <person name="Wincker P."/>
            <person name="Souciet J.-L."/>
        </authorList>
    </citation>
    <scope>NUCLEOTIDE SEQUENCE [LARGE SCALE GENOMIC DNA]</scope>
    <source>
        <strain>ATCC 2001 / BCRC 20586 / JCM 3761 / NBRC 0622 / NRRL Y-65 / CBS 138</strain>
    </source>
</reference>
<protein>
    <recommendedName>
        <fullName>Autophagy-related protein 2</fullName>
    </recommendedName>
</protein>
<gene>
    <name type="primary">ATG2</name>
    <name type="ordered locus">CAGL0J07634g</name>
</gene>
<proteinExistence type="inferred from homology"/>
<comment type="function">
    <text evidence="2">Lipid transfer protein required for autophagosome completion and peroxisome degradation. Tethers the edge of the isolation membrane (IM) to the endoplasmic reticulum (ER) and mediates direct lipid transfer from ER to IM for IM expansion. ATG2 binds to the ER exit site (ERES), which is the membrane source for autophagosome formation, using basic residues in its N-terminal region (NR) and to the expanding edge of the IM through its C-terminal region. The latter binding is assisted by an ATG18-PtdIns3P interaction. ATG2 then extracts phospholipids from the membrane source using its NR and transfers them to ATG9 to the IM through its predicted beta-sheet-rich structure for membrane expansion.</text>
</comment>
<comment type="catalytic activity">
    <reaction evidence="1">
        <text>a 1,2-diacyl-sn-glycero-3-phosphocholine(in) = a 1,2-diacyl-sn-glycero-3-phosphocholine(out)</text>
        <dbReference type="Rhea" id="RHEA:38571"/>
        <dbReference type="ChEBI" id="CHEBI:57643"/>
    </reaction>
</comment>
<comment type="catalytic activity">
    <reaction evidence="1">
        <text>a 1,2-diacyl-sn-glycero-3-phospho-L-serine(in) = a 1,2-diacyl-sn-glycero-3-phospho-L-serine(out)</text>
        <dbReference type="Rhea" id="RHEA:38663"/>
        <dbReference type="ChEBI" id="CHEBI:57262"/>
    </reaction>
</comment>
<comment type="catalytic activity">
    <reaction evidence="1">
        <text>a 1,2-diacyl-sn-glycero-3-phosphoethanolamine(in) = a 1,2-diacyl-sn-glycero-3-phosphoethanolamine(out)</text>
        <dbReference type="Rhea" id="RHEA:38895"/>
        <dbReference type="ChEBI" id="CHEBI:64612"/>
    </reaction>
</comment>
<comment type="subcellular location">
    <subcellularLocation>
        <location evidence="2">Preautophagosomal structure membrane</location>
        <topology evidence="2">Peripheral membrane protein</topology>
    </subcellularLocation>
    <subcellularLocation>
        <location evidence="2">Endoplasmic reticulum membrane</location>
        <topology evidence="2">Peripheral membrane protein</topology>
    </subcellularLocation>
</comment>
<comment type="similarity">
    <text evidence="4">Belongs to the ATG2 family.</text>
</comment>
<accession>Q6FP05</accession>
<organism>
    <name type="scientific">Candida glabrata (strain ATCC 2001 / BCRC 20586 / JCM 3761 / NBRC 0622 / NRRL Y-65 / CBS 138)</name>
    <name type="common">Yeast</name>
    <name type="synonym">Nakaseomyces glabratus</name>
    <dbReference type="NCBI Taxonomy" id="284593"/>
    <lineage>
        <taxon>Eukaryota</taxon>
        <taxon>Fungi</taxon>
        <taxon>Dikarya</taxon>
        <taxon>Ascomycota</taxon>
        <taxon>Saccharomycotina</taxon>
        <taxon>Saccharomycetes</taxon>
        <taxon>Saccharomycetales</taxon>
        <taxon>Saccharomycetaceae</taxon>
        <taxon>Nakaseomyces</taxon>
    </lineage>
</organism>
<sequence>MAFWLPQNIQRRLILYVLQQITLFSNVDITKLDVSLGSHSKFTFQDVDLNISEMNISGCEVNSGMLGKLMLGLTVSGDVHISGDNIDFMITMINEDDFNDMNSFSLAKSFYDLTSSIMQFKPDAHLKNEISGSGSDSPRIPDDYTNPSSAGGNPTTNTYDIIVDDTASSTTESDDSSPIDSIPTSRFNIMQQKVIATALAKLKITLQSVRIRINLGKRKDCNCLDVVVKRIDMSTSEGHVRNFDANGISIAYINNEPSVVPPNNMDMAESLYFSQADASSIYMSALSDANTDIKSLDASVFNSERYELLSINGMSFSFVGISSIDDFAISRIKINLGTLQVNIPFLLKVREDIILTMIFKLISPRHTDKVDVKNSPAYKRFQNELHSNDTNLFSNLAIEEILIGLSSNQKIILRAVDLESNEINGINLSVGDIDLVGLDMDWISETRPCFNASFGKSNTIIELANTIIRVSEHDLILFLKIYYEIMDFIDFVLSKWKILGVKQVSQLRNDEKFSLNVGSLVIEIPLDNSILEINIPNIEHDSLNQDLKLYEVNMTHIVESIKISSLKLKEVSIDLSSARKKMKCYNEHFSQYFVFTHYKVQITGIDSQINLKSLWIIGAVIEQFYIASPVQEYPEATNKNSVRFHDNNKRLLSTSLMINKRAILAKYIIELDDIKVCISGFDADQIRHCKFSLQRLLFLNQIDKGLLFNIFQPHVEIKFFSGSLNDIIRSTNIGVSGQPHLILCIFADKKIKVSIKDIMIFYQAKWLDSVQRNASLDQEKGQNVEYSELPEFSISIRDSAINFLPFRINPSLVILFESIIVTKSGNDALINMHSKVGRFYLTDNYDHLKTTQVMNKTICDSLIKSGYSQIGKFEGLSMTLNKKHKIVNCNGCLEKVILSVCSDSFHTLVQLCMDLKVPVTFPDDKKYQPVPSVAVDLFETIEENEFNLSNLDNKDIDKSIGSDSDSLHIVNSFLDEVEDFQFHEDYNSGTVWSHTTSDTHSSSDILPISLKEEYLDSRRTEVQKHSQSNDRNIISEIDFDIKNADIRLYDGYDWRYTRKNVSSAISELEEGLLSGIQRQEQTESELSRTTVFDSICIATKQKDLGNLKQIISEQVQGKHDHLNSDKVYLYPSKHYKSLIKANELIFKIKIYDSNSPRNEEFNNHAAKLFQITASISTYEVLDNLPTSTWNKFVTLLKKEAWPKSEPMLYFDFMLFKPINSLEATEATINIRSAPLRIHADQYMVDFLLRFFQFNDKRFELIDEYPEILFLQKFKSNTIKLRIDYKPNKTSSGMYSGKISDLINLFVLDESKVTLKGVVLHGINGFNELSEQLVKIWGNDVTSKQIFNILQGFAPVKSFIALGAGAQTFITVLLAEYKRDRSISRSVKKSGNIFIKTTTGDFIKLGAKLAVGTQALLENTEGILSGNATQNRTLADVSQTNKVLDLDSLLQQDQVLIGRNPKIRNKSPSAIIIDAADLEESGRPKVVSLYSEQPLDLHKGLEEAYHALEKHIQIAYNTIWQTNQELRGEESRSAKAAAVTIAKAAPVAVIRPMIGATEAIAKTLQGIYNQLDKSNIEEINDKYKKEDN</sequence>
<feature type="chain" id="PRO_0000215828" description="Autophagy-related protein 2">
    <location>
        <begin position="1"/>
        <end position="1587"/>
    </location>
</feature>
<feature type="region of interest" description="Disordered" evidence="3">
    <location>
        <begin position="128"/>
        <end position="160"/>
    </location>
</feature>
<feature type="compositionally biased region" description="Polar residues" evidence="3">
    <location>
        <begin position="145"/>
        <end position="159"/>
    </location>
</feature>
<evidence type="ECO:0000250" key="1">
    <source>
        <dbReference type="UniProtKB" id="O94649"/>
    </source>
</evidence>
<evidence type="ECO:0000250" key="2">
    <source>
        <dbReference type="UniProtKB" id="P53855"/>
    </source>
</evidence>
<evidence type="ECO:0000256" key="3">
    <source>
        <dbReference type="SAM" id="MobiDB-lite"/>
    </source>
</evidence>
<evidence type="ECO:0000305" key="4"/>
<dbReference type="EMBL" id="CR380956">
    <property type="protein sequence ID" value="CAG60990.1"/>
    <property type="molecule type" value="Genomic_DNA"/>
</dbReference>
<dbReference type="FunCoup" id="Q6FP05">
    <property type="interactions" value="57"/>
</dbReference>
<dbReference type="STRING" id="284593.Q6FP05"/>
<dbReference type="EnsemblFungi" id="CAGL0J07634g-T">
    <property type="protein sequence ID" value="CAGL0J07634g-T-p1"/>
    <property type="gene ID" value="CAGL0J07634g"/>
</dbReference>
<dbReference type="KEGG" id="cgr:2889899"/>
<dbReference type="CGD" id="CAL0133478">
    <property type="gene designation" value="SPO72"/>
</dbReference>
<dbReference type="VEuPathDB" id="FungiDB:CAGL0J07634g"/>
<dbReference type="eggNOG" id="KOG2993">
    <property type="taxonomic scope" value="Eukaryota"/>
</dbReference>
<dbReference type="HOGENOM" id="CLU_000626_3_0_1"/>
<dbReference type="InParanoid" id="Q6FP05"/>
<dbReference type="OMA" id="YDWKYTR"/>
<dbReference type="Proteomes" id="UP000002428">
    <property type="component" value="Chromosome J"/>
</dbReference>
<dbReference type="GO" id="GO:0005789">
    <property type="term" value="C:endoplasmic reticulum membrane"/>
    <property type="evidence" value="ECO:0007669"/>
    <property type="project" value="UniProtKB-SubCell"/>
</dbReference>
<dbReference type="GO" id="GO:0097632">
    <property type="term" value="C:extrinsic component of phagophore assembly site membrane"/>
    <property type="evidence" value="ECO:0007669"/>
    <property type="project" value="EnsemblFungi"/>
</dbReference>
<dbReference type="GO" id="GO:0061908">
    <property type="term" value="C:phagophore"/>
    <property type="evidence" value="ECO:0007669"/>
    <property type="project" value="EnsemblFungi"/>
</dbReference>
<dbReference type="GO" id="GO:0032991">
    <property type="term" value="C:protein-containing complex"/>
    <property type="evidence" value="ECO:0007669"/>
    <property type="project" value="EnsemblFungi"/>
</dbReference>
<dbReference type="GO" id="GO:0120013">
    <property type="term" value="F:lipid transfer activity"/>
    <property type="evidence" value="ECO:0007669"/>
    <property type="project" value="EnsemblFungi"/>
</dbReference>
<dbReference type="GO" id="GO:0032266">
    <property type="term" value="F:phosphatidylinositol-3-phosphate binding"/>
    <property type="evidence" value="ECO:0007669"/>
    <property type="project" value="EnsemblFungi"/>
</dbReference>
<dbReference type="GO" id="GO:0043495">
    <property type="term" value="F:protein-membrane adaptor activity"/>
    <property type="evidence" value="ECO:0007669"/>
    <property type="project" value="TreeGrafter"/>
</dbReference>
<dbReference type="GO" id="GO:0000045">
    <property type="term" value="P:autophagosome assembly"/>
    <property type="evidence" value="ECO:0007669"/>
    <property type="project" value="EnsemblFungi"/>
</dbReference>
<dbReference type="GO" id="GO:0000422">
    <property type="term" value="P:autophagy of mitochondrion"/>
    <property type="evidence" value="ECO:0007669"/>
    <property type="project" value="EnsemblFungi"/>
</dbReference>
<dbReference type="GO" id="GO:0032258">
    <property type="term" value="P:cytoplasm to vacuole targeting by the Cvt pathway"/>
    <property type="evidence" value="ECO:0007669"/>
    <property type="project" value="EnsemblFungi"/>
</dbReference>
<dbReference type="GO" id="GO:0061723">
    <property type="term" value="P:glycophagy"/>
    <property type="evidence" value="ECO:0007669"/>
    <property type="project" value="TreeGrafter"/>
</dbReference>
<dbReference type="GO" id="GO:0000425">
    <property type="term" value="P:pexophagy"/>
    <property type="evidence" value="ECO:0007669"/>
    <property type="project" value="EnsemblFungi"/>
</dbReference>
<dbReference type="GO" id="GO:0034727">
    <property type="term" value="P:piecemeal microautophagy of the nucleus"/>
    <property type="evidence" value="ECO:0007669"/>
    <property type="project" value="EnsemblFungi"/>
</dbReference>
<dbReference type="GO" id="GO:0061709">
    <property type="term" value="P:reticulophagy"/>
    <property type="evidence" value="ECO:0007669"/>
    <property type="project" value="EnsemblFungi"/>
</dbReference>
<dbReference type="InterPro" id="IPR026849">
    <property type="entry name" value="ATG2"/>
</dbReference>
<dbReference type="PANTHER" id="PTHR13190">
    <property type="entry name" value="AUTOPHAGY-RELATED 2, ISOFORM A"/>
    <property type="match status" value="1"/>
</dbReference>
<dbReference type="PANTHER" id="PTHR13190:SF1">
    <property type="entry name" value="AUTOPHAGY-RELATED 2, ISOFORM A"/>
    <property type="match status" value="1"/>
</dbReference>
<dbReference type="Pfam" id="PF13329">
    <property type="entry name" value="ATG2_CAD"/>
    <property type="match status" value="1"/>
</dbReference>
<keyword id="KW-0072">Autophagy</keyword>
<keyword id="KW-0256">Endoplasmic reticulum</keyword>
<keyword id="KW-0445">Lipid transport</keyword>
<keyword id="KW-0472">Membrane</keyword>
<keyword id="KW-0653">Protein transport</keyword>
<keyword id="KW-1185">Reference proteome</keyword>
<keyword id="KW-0813">Transport</keyword>
<name>ATG2_CANGA</name>